<reference key="1">
    <citation type="journal article" date="2009" name="J. Bacteriol.">
        <title>Complete and draft genome sequences of six members of the Aquificales.</title>
        <authorList>
            <person name="Reysenbach A.-L."/>
            <person name="Hamamura N."/>
            <person name="Podar M."/>
            <person name="Griffiths E."/>
            <person name="Ferreira S."/>
            <person name="Hochstein R."/>
            <person name="Heidelberg J."/>
            <person name="Johnson J."/>
            <person name="Mead D."/>
            <person name="Pohorille A."/>
            <person name="Sarmiento M."/>
            <person name="Schweighofer K."/>
            <person name="Seshadri R."/>
            <person name="Voytek M.A."/>
        </authorList>
    </citation>
    <scope>NUCLEOTIDE SEQUENCE [LARGE SCALE GENOMIC DNA]</scope>
    <source>
        <strain>Y04AAS1</strain>
    </source>
</reference>
<comment type="similarity">
    <text evidence="1">Belongs to the universal ribosomal protein uL29 family.</text>
</comment>
<sequence>MKARDLHQLSIQELEAKLKELKTELFKLRITKKIEGLKEPSKIRDTKRDIARILTVINEKRRGQAV</sequence>
<evidence type="ECO:0000255" key="1">
    <source>
        <dbReference type="HAMAP-Rule" id="MF_00374"/>
    </source>
</evidence>
<evidence type="ECO:0000305" key="2"/>
<keyword id="KW-0687">Ribonucleoprotein</keyword>
<keyword id="KW-0689">Ribosomal protein</keyword>
<organism>
    <name type="scientific">Hydrogenobaculum sp. (strain Y04AAS1)</name>
    <dbReference type="NCBI Taxonomy" id="380749"/>
    <lineage>
        <taxon>Bacteria</taxon>
        <taxon>Pseudomonadati</taxon>
        <taxon>Aquificota</taxon>
        <taxon>Aquificia</taxon>
        <taxon>Aquificales</taxon>
        <taxon>Aquificaceae</taxon>
        <taxon>Hydrogenobaculum</taxon>
    </lineage>
</organism>
<proteinExistence type="inferred from homology"/>
<accession>B4U752</accession>
<name>RL29_HYDS0</name>
<protein>
    <recommendedName>
        <fullName evidence="1">Large ribosomal subunit protein uL29</fullName>
    </recommendedName>
    <alternativeName>
        <fullName evidence="2">50S ribosomal protein L29</fullName>
    </alternativeName>
</protein>
<feature type="chain" id="PRO_1000121780" description="Large ribosomal subunit protein uL29">
    <location>
        <begin position="1"/>
        <end position="66"/>
    </location>
</feature>
<gene>
    <name evidence="1" type="primary">rpmC</name>
    <name type="ordered locus">HY04AAS1_0273</name>
</gene>
<dbReference type="EMBL" id="CP001130">
    <property type="protein sequence ID" value="ACG56963.1"/>
    <property type="molecule type" value="Genomic_DNA"/>
</dbReference>
<dbReference type="RefSeq" id="WP_012513319.1">
    <property type="nucleotide sequence ID" value="NC_011126.1"/>
</dbReference>
<dbReference type="SMR" id="B4U752"/>
<dbReference type="STRING" id="380749.HY04AAS1_0273"/>
<dbReference type="KEGG" id="hya:HY04AAS1_0273"/>
<dbReference type="eggNOG" id="COG0255">
    <property type="taxonomic scope" value="Bacteria"/>
</dbReference>
<dbReference type="HOGENOM" id="CLU_158491_5_2_0"/>
<dbReference type="OrthoDB" id="9815192at2"/>
<dbReference type="GO" id="GO:0022625">
    <property type="term" value="C:cytosolic large ribosomal subunit"/>
    <property type="evidence" value="ECO:0007669"/>
    <property type="project" value="TreeGrafter"/>
</dbReference>
<dbReference type="GO" id="GO:0003735">
    <property type="term" value="F:structural constituent of ribosome"/>
    <property type="evidence" value="ECO:0007669"/>
    <property type="project" value="InterPro"/>
</dbReference>
<dbReference type="GO" id="GO:0006412">
    <property type="term" value="P:translation"/>
    <property type="evidence" value="ECO:0007669"/>
    <property type="project" value="UniProtKB-UniRule"/>
</dbReference>
<dbReference type="CDD" id="cd00427">
    <property type="entry name" value="Ribosomal_L29_HIP"/>
    <property type="match status" value="1"/>
</dbReference>
<dbReference type="FunFam" id="1.10.287.310:FF:000001">
    <property type="entry name" value="50S ribosomal protein L29"/>
    <property type="match status" value="1"/>
</dbReference>
<dbReference type="Gene3D" id="1.10.287.310">
    <property type="match status" value="1"/>
</dbReference>
<dbReference type="HAMAP" id="MF_00374">
    <property type="entry name" value="Ribosomal_uL29"/>
    <property type="match status" value="1"/>
</dbReference>
<dbReference type="InterPro" id="IPR050063">
    <property type="entry name" value="Ribosomal_protein_uL29"/>
</dbReference>
<dbReference type="InterPro" id="IPR001854">
    <property type="entry name" value="Ribosomal_uL29"/>
</dbReference>
<dbReference type="InterPro" id="IPR036049">
    <property type="entry name" value="Ribosomal_uL29_sf"/>
</dbReference>
<dbReference type="NCBIfam" id="TIGR00012">
    <property type="entry name" value="L29"/>
    <property type="match status" value="1"/>
</dbReference>
<dbReference type="PANTHER" id="PTHR10916">
    <property type="entry name" value="60S RIBOSOMAL PROTEIN L35/50S RIBOSOMAL PROTEIN L29"/>
    <property type="match status" value="1"/>
</dbReference>
<dbReference type="PANTHER" id="PTHR10916:SF0">
    <property type="entry name" value="LARGE RIBOSOMAL SUBUNIT PROTEIN UL29C"/>
    <property type="match status" value="1"/>
</dbReference>
<dbReference type="Pfam" id="PF00831">
    <property type="entry name" value="Ribosomal_L29"/>
    <property type="match status" value="1"/>
</dbReference>
<dbReference type="SUPFAM" id="SSF46561">
    <property type="entry name" value="Ribosomal protein L29 (L29p)"/>
    <property type="match status" value="1"/>
</dbReference>